<dbReference type="EMBL" id="CM002236">
    <property type="protein sequence ID" value="EAA29080.1"/>
    <property type="molecule type" value="Genomic_DNA"/>
</dbReference>
<dbReference type="RefSeq" id="XP_958316.1">
    <property type="nucleotide sequence ID" value="XM_953223.2"/>
</dbReference>
<dbReference type="SMR" id="Q7S158"/>
<dbReference type="FunCoup" id="Q7S158">
    <property type="interactions" value="45"/>
</dbReference>
<dbReference type="STRING" id="367110.Q7S158"/>
<dbReference type="PaxDb" id="5141-EFNCRP00000006484"/>
<dbReference type="EnsemblFungi" id="EAA29080">
    <property type="protein sequence ID" value="EAA29080"/>
    <property type="gene ID" value="NCU09107"/>
</dbReference>
<dbReference type="GeneID" id="3874464"/>
<dbReference type="KEGG" id="ncr:NCU09107"/>
<dbReference type="VEuPathDB" id="FungiDB:NCU09107"/>
<dbReference type="HOGENOM" id="CLU_154717_1_1_1"/>
<dbReference type="InParanoid" id="Q7S158"/>
<dbReference type="OMA" id="AMKEDQT"/>
<dbReference type="OrthoDB" id="160405at2759"/>
<dbReference type="Proteomes" id="UP000001805">
    <property type="component" value="Chromosome 1, Linkage Group I"/>
</dbReference>
<dbReference type="GO" id="GO:0005789">
    <property type="term" value="C:endoplasmic reticulum membrane"/>
    <property type="evidence" value="ECO:0000318"/>
    <property type="project" value="GO_Central"/>
</dbReference>
<dbReference type="GO" id="GO:0033116">
    <property type="term" value="C:endoplasmic reticulum-Golgi intermediate compartment membrane"/>
    <property type="evidence" value="ECO:0007669"/>
    <property type="project" value="UniProtKB-SubCell"/>
</dbReference>
<dbReference type="GO" id="GO:0012507">
    <property type="term" value="C:ER to Golgi transport vesicle membrane"/>
    <property type="evidence" value="ECO:0007669"/>
    <property type="project" value="UniProtKB-SubCell"/>
</dbReference>
<dbReference type="GO" id="GO:0070072">
    <property type="term" value="P:vacuolar proton-transporting V-type ATPase complex assembly"/>
    <property type="evidence" value="ECO:0000318"/>
    <property type="project" value="GO_Central"/>
</dbReference>
<dbReference type="HAMAP" id="MF_03058">
    <property type="entry name" value="VMA21"/>
    <property type="match status" value="1"/>
</dbReference>
<dbReference type="InterPro" id="IPR019013">
    <property type="entry name" value="Vma21"/>
</dbReference>
<dbReference type="PANTHER" id="PTHR31792">
    <property type="entry name" value="VACUOLAR ATPASE ASSEMBLY INTEGRAL MEMBRANE PROTEIN VMA21"/>
    <property type="match status" value="1"/>
</dbReference>
<dbReference type="PANTHER" id="PTHR31792:SF3">
    <property type="entry name" value="VACUOLAR ATPASE ASSEMBLY INTEGRAL MEMBRANE PROTEIN VMA21"/>
    <property type="match status" value="1"/>
</dbReference>
<dbReference type="Pfam" id="PF09446">
    <property type="entry name" value="VMA21"/>
    <property type="match status" value="1"/>
</dbReference>
<protein>
    <recommendedName>
        <fullName evidence="1">Vacuolar ATPase assembly integral membrane protein vma-21</fullName>
    </recommendedName>
</protein>
<gene>
    <name type="primary">vma-21</name>
    <name type="ORF">NCU09107</name>
</gene>
<feature type="chain" id="PRO_0000377592" description="Vacuolar ATPase assembly integral membrane protein vma-21">
    <location>
        <begin position="1"/>
        <end position="118"/>
    </location>
</feature>
<feature type="topological domain" description="Cytoplasmic" evidence="1">
    <location>
        <begin position="1"/>
        <end position="35"/>
    </location>
</feature>
<feature type="transmembrane region" description="Helical" evidence="1">
    <location>
        <begin position="36"/>
        <end position="56"/>
    </location>
</feature>
<feature type="topological domain" description="Lumenal" evidence="1">
    <location>
        <begin position="57"/>
        <end position="73"/>
    </location>
</feature>
<feature type="transmembrane region" description="Helical" evidence="1">
    <location>
        <begin position="74"/>
        <end position="94"/>
    </location>
</feature>
<feature type="topological domain" description="Cytoplasmic" evidence="1">
    <location>
        <begin position="95"/>
        <end position="118"/>
    </location>
</feature>
<feature type="region of interest" description="Disordered" evidence="2">
    <location>
        <begin position="98"/>
        <end position="118"/>
    </location>
</feature>
<feature type="short sequence motif" description="Prevents secretion from ER">
    <location>
        <begin position="115"/>
        <end position="118"/>
    </location>
</feature>
<feature type="compositionally biased region" description="Basic and acidic residues" evidence="2">
    <location>
        <begin position="102"/>
        <end position="118"/>
    </location>
</feature>
<keyword id="KW-0968">Cytoplasmic vesicle</keyword>
<keyword id="KW-0256">Endoplasmic reticulum</keyword>
<keyword id="KW-0472">Membrane</keyword>
<keyword id="KW-1185">Reference proteome</keyword>
<keyword id="KW-0812">Transmembrane</keyword>
<keyword id="KW-1133">Transmembrane helix</keyword>
<evidence type="ECO:0000255" key="1">
    <source>
        <dbReference type="HAMAP-Rule" id="MF_03058"/>
    </source>
</evidence>
<evidence type="ECO:0000256" key="2">
    <source>
        <dbReference type="SAM" id="MobiDB-lite"/>
    </source>
</evidence>
<reference key="1">
    <citation type="journal article" date="2003" name="Nature">
        <title>The genome sequence of the filamentous fungus Neurospora crassa.</title>
        <authorList>
            <person name="Galagan J.E."/>
            <person name="Calvo S.E."/>
            <person name="Borkovich K.A."/>
            <person name="Selker E.U."/>
            <person name="Read N.D."/>
            <person name="Jaffe D.B."/>
            <person name="FitzHugh W."/>
            <person name="Ma L.-J."/>
            <person name="Smirnov S."/>
            <person name="Purcell S."/>
            <person name="Rehman B."/>
            <person name="Elkins T."/>
            <person name="Engels R."/>
            <person name="Wang S."/>
            <person name="Nielsen C.B."/>
            <person name="Butler J."/>
            <person name="Endrizzi M."/>
            <person name="Qui D."/>
            <person name="Ianakiev P."/>
            <person name="Bell-Pedersen D."/>
            <person name="Nelson M.A."/>
            <person name="Werner-Washburne M."/>
            <person name="Selitrennikoff C.P."/>
            <person name="Kinsey J.A."/>
            <person name="Braun E.L."/>
            <person name="Zelter A."/>
            <person name="Schulte U."/>
            <person name="Kothe G.O."/>
            <person name="Jedd G."/>
            <person name="Mewes H.-W."/>
            <person name="Staben C."/>
            <person name="Marcotte E."/>
            <person name="Greenberg D."/>
            <person name="Roy A."/>
            <person name="Foley K."/>
            <person name="Naylor J."/>
            <person name="Stange-Thomann N."/>
            <person name="Barrett R."/>
            <person name="Gnerre S."/>
            <person name="Kamal M."/>
            <person name="Kamvysselis M."/>
            <person name="Mauceli E.W."/>
            <person name="Bielke C."/>
            <person name="Rudd S."/>
            <person name="Frishman D."/>
            <person name="Krystofova S."/>
            <person name="Rasmussen C."/>
            <person name="Metzenberg R.L."/>
            <person name="Perkins D.D."/>
            <person name="Kroken S."/>
            <person name="Cogoni C."/>
            <person name="Macino G."/>
            <person name="Catcheside D.E.A."/>
            <person name="Li W."/>
            <person name="Pratt R.J."/>
            <person name="Osmani S.A."/>
            <person name="DeSouza C.P.C."/>
            <person name="Glass N.L."/>
            <person name="Orbach M.J."/>
            <person name="Berglund J.A."/>
            <person name="Voelker R."/>
            <person name="Yarden O."/>
            <person name="Plamann M."/>
            <person name="Seiler S."/>
            <person name="Dunlap J.C."/>
            <person name="Radford A."/>
            <person name="Aramayo R."/>
            <person name="Natvig D.O."/>
            <person name="Alex L.A."/>
            <person name="Mannhaupt G."/>
            <person name="Ebbole D.J."/>
            <person name="Freitag M."/>
            <person name="Paulsen I."/>
            <person name="Sachs M.S."/>
            <person name="Lander E.S."/>
            <person name="Nusbaum C."/>
            <person name="Birren B.W."/>
        </authorList>
    </citation>
    <scope>NUCLEOTIDE SEQUENCE [LARGE SCALE GENOMIC DNA]</scope>
    <source>
        <strain>ATCC 24698 / 74-OR23-1A / CBS 708.71 / DSM 1257 / FGSC 987</strain>
    </source>
</reference>
<comment type="function">
    <text evidence="1">Required for the assembly of the V0 complex of the vacuolar ATPase (V-ATPase) in the endoplasmic reticulum.</text>
</comment>
<comment type="subcellular location">
    <subcellularLocation>
        <location evidence="1">Endoplasmic reticulum membrane</location>
        <topology evidence="1">Multi-pass membrane protein</topology>
    </subcellularLocation>
    <subcellularLocation>
        <location evidence="1">Endoplasmic reticulum-Golgi intermediate compartment membrane</location>
        <topology evidence="1">Multi-pass membrane protein</topology>
    </subcellularLocation>
    <subcellularLocation>
        <location evidence="1">Cytoplasmic vesicle</location>
        <location evidence="1">COPII-coated vesicle membrane</location>
        <topology evidence="1">Multi-pass membrane protein</topology>
    </subcellularLocation>
</comment>
<comment type="similarity">
    <text evidence="1">Belongs to the VMA21 family.</text>
</comment>
<organism>
    <name type="scientific">Neurospora crassa (strain ATCC 24698 / 74-OR23-1A / CBS 708.71 / DSM 1257 / FGSC 987)</name>
    <dbReference type="NCBI Taxonomy" id="367110"/>
    <lineage>
        <taxon>Eukaryota</taxon>
        <taxon>Fungi</taxon>
        <taxon>Dikarya</taxon>
        <taxon>Ascomycota</taxon>
        <taxon>Pezizomycotina</taxon>
        <taxon>Sordariomycetes</taxon>
        <taxon>Sordariomycetidae</taxon>
        <taxon>Sordariales</taxon>
        <taxon>Sordariaceae</taxon>
        <taxon>Neurospora</taxon>
    </lineage>
</organism>
<accession>Q7S158</accession>
<name>VMA21_NEUCR</name>
<sequence>MATRRIISQEKTLLEKDDRIGSSPAASEKSNITPAVPASVIIKLLAFTFAMIVIPISSYFLTVDRLFKGNSTYAGATAAIMANVVLIGYIIVAMAEDQSDQENEKKGGGGKGEGKKDL</sequence>
<proteinExistence type="inferred from homology"/>